<reference key="1">
    <citation type="journal article" date="1995" name="J. Biol. Chem.">
        <title>Molecular cloning of a new member of the p21-Cdc42/Rac-activated kinase (PAK) family.</title>
        <authorList>
            <person name="Manser E."/>
            <person name="Chong C."/>
            <person name="Zhao Z.-S."/>
            <person name="Leung T."/>
            <person name="Michael G."/>
            <person name="Hall C."/>
            <person name="Lim L."/>
        </authorList>
    </citation>
    <scope>NUCLEOTIDE SEQUENCE [MRNA]</scope>
    <scope>PROTEIN SEQUENCE OF 37-56</scope>
    <source>
        <tissue>Brain</tissue>
    </source>
</reference>
<reference key="2">
    <citation type="journal article" date="2003" name="J. Neurosci.">
        <title>DNA synthesis and neuronal apoptosis caused by familial Alzheimer disease mutants of the amyloid precursor protein are mediated by the p21 activated kinase PAK3.</title>
        <authorList>
            <person name="McPhie D.L."/>
            <person name="Coopersmith R."/>
            <person name="Hines-Peralta A."/>
            <person name="Chen Y."/>
            <person name="Ivins K.J."/>
            <person name="Manly S.P."/>
            <person name="Kozlowski M.R."/>
            <person name="Neve K.A."/>
            <person name="Neve R.L."/>
        </authorList>
    </citation>
    <scope>FUNCTION</scope>
    <scope>TISSUE SPECIFICITY</scope>
    <scope>INTERACTION WITH APP</scope>
    <scope>MUTAGENESIS OF LYS-297 AND THR-421</scope>
</reference>
<reference key="3">
    <citation type="journal article" date="2001" name="J. Biol. Chem.">
        <title>The mechanism of PAK activation. Autophosphorylation events in both regulatory and kinase domains control activity.</title>
        <authorList>
            <person name="Chong C."/>
            <person name="Tan L."/>
            <person name="Lim L."/>
            <person name="Manser E."/>
        </authorList>
    </citation>
    <scope>PHOSPHORYLATION AT SER-50; SER-139 AND THR-421</scope>
</reference>
<reference key="4">
    <citation type="journal article" date="2012" name="Nat. Commun.">
        <title>Quantitative maps of protein phosphorylation sites across 14 different rat organs and tissues.</title>
        <authorList>
            <person name="Lundby A."/>
            <person name="Secher A."/>
            <person name="Lage K."/>
            <person name="Nordsborg N.B."/>
            <person name="Dmytriyev A."/>
            <person name="Lundby C."/>
            <person name="Olsen J.V."/>
        </authorList>
    </citation>
    <scope>PHOSPHORYLATION [LARGE SCALE ANALYSIS] AT SER-2 AND SER-4</scope>
    <scope>IDENTIFICATION BY MASS SPECTROMETRY [LARGE SCALE ANALYSIS]</scope>
</reference>
<comment type="function">
    <text evidence="3 9">Serine/threonine protein kinase that plays a role in a variety of different signaling pathways including cytoskeleton regulation, cell migration, or cell cycle regulation. Plays a role in dendrite spine morphogenesis as well as synapse formation and plasticity. Acts as a downstream effector of the small GTPases CDC42 and RAC1. Activation by the binding of active CDC42 and RAC1 results in a conformational change and a subsequent autophosphorylation on several serine and/or threonine residues. Phosphorylates MAPK4 and MAPK6 and activates the downstream target MAPKAPK5, a regulator of F-actin polymerization and cell migration. Additionally, phosphorylates TNNI3/troponin I to modulate calcium sensitivity and relaxation kinetics of thin myofilaments. May also be involved in early neuronal development (PubMed:12890786). In hippocampal neurons, necessary for the formation of dendritic spines and excitatory synapses; this function is dependent on kinase activity and may be exerted by the regulation of actomyosin contractility through the phosphorylation of myosin II regulatory light chain (MLC) (By similarity).</text>
</comment>
<comment type="catalytic activity">
    <reaction>
        <text>L-seryl-[protein] + ATP = O-phospho-L-seryl-[protein] + ADP + H(+)</text>
        <dbReference type="Rhea" id="RHEA:17989"/>
        <dbReference type="Rhea" id="RHEA-COMP:9863"/>
        <dbReference type="Rhea" id="RHEA-COMP:11604"/>
        <dbReference type="ChEBI" id="CHEBI:15378"/>
        <dbReference type="ChEBI" id="CHEBI:29999"/>
        <dbReference type="ChEBI" id="CHEBI:30616"/>
        <dbReference type="ChEBI" id="CHEBI:83421"/>
        <dbReference type="ChEBI" id="CHEBI:456216"/>
        <dbReference type="EC" id="2.7.11.1"/>
    </reaction>
</comment>
<comment type="catalytic activity">
    <reaction>
        <text>L-threonyl-[protein] + ATP = O-phospho-L-threonyl-[protein] + ADP + H(+)</text>
        <dbReference type="Rhea" id="RHEA:46608"/>
        <dbReference type="Rhea" id="RHEA-COMP:11060"/>
        <dbReference type="Rhea" id="RHEA-COMP:11605"/>
        <dbReference type="ChEBI" id="CHEBI:15378"/>
        <dbReference type="ChEBI" id="CHEBI:30013"/>
        <dbReference type="ChEBI" id="CHEBI:30616"/>
        <dbReference type="ChEBI" id="CHEBI:61977"/>
        <dbReference type="ChEBI" id="CHEBI:456216"/>
        <dbReference type="EC" id="2.7.11.1"/>
    </reaction>
</comment>
<comment type="cofactor">
    <cofactor>
        <name>Mg(2+)</name>
        <dbReference type="ChEBI" id="CHEBI:18420"/>
    </cofactor>
</comment>
<comment type="activity regulation">
    <text evidence="1">Activated by binding small G proteins. Binding of GTP-bound CDC42 or RAC1 to the autoregulatory region releases monomers from the autoinhibited dimer, enables phosphorylation of Thr-421 and allows the kinase domain to adopt an active structure (By similarity).</text>
</comment>
<comment type="subunit">
    <text evidence="1 2">Interacts tightly with GTP-bound but not GDP-bound CDC42/p21 and RAC1. Shows highly specific binding to the SH3 domains of phospholipase C-gamma and of adapter protein NCK. Interacts with the C-terminal of APP. Interacts with ARHGEF6 and ARHGEF7 (By similarity). Interacts with GIT1 and GIT2 (By similarity).</text>
</comment>
<comment type="subcellular location">
    <subcellularLocation>
        <location evidence="1">Cytoplasm</location>
    </subcellularLocation>
</comment>
<comment type="tissue specificity">
    <text evidence="9">Detected at high levels in the brain and at low levels in the testis.</text>
</comment>
<comment type="developmental stage">
    <text>Found in the embryonic CNS with little expression elsewhere.</text>
</comment>
<comment type="PTM">
    <text evidence="8">Autophosphorylated when activated by CDC42/p21.</text>
</comment>
<comment type="PTM">
    <text evidence="1">Neddylated.</text>
</comment>
<comment type="similarity">
    <text evidence="10">Belongs to the protein kinase superfamily. STE Ser/Thr protein kinase family. STE20 subfamily.</text>
</comment>
<feature type="chain" id="PRO_0000086473" description="Serine/threonine-protein kinase PAK 3">
    <location>
        <begin position="1"/>
        <end position="544"/>
    </location>
</feature>
<feature type="domain" description="CRIB" evidence="4">
    <location>
        <begin position="70"/>
        <end position="83"/>
    </location>
</feature>
<feature type="domain" description="Protein kinase" evidence="5">
    <location>
        <begin position="268"/>
        <end position="519"/>
    </location>
</feature>
<feature type="region of interest" description="Disordered" evidence="7">
    <location>
        <begin position="1"/>
        <end position="73"/>
    </location>
</feature>
<feature type="region of interest" description="Autoregulatory region" evidence="1">
    <location>
        <begin position="65"/>
        <end position="135"/>
    </location>
</feature>
<feature type="region of interest" description="GTPase-binding" evidence="1">
    <location>
        <begin position="65"/>
        <end position="108"/>
    </location>
</feature>
<feature type="region of interest" description="Linker">
    <location>
        <begin position="84"/>
        <end position="267"/>
    </location>
</feature>
<feature type="region of interest" description="Disordered" evidence="7">
    <location>
        <begin position="156"/>
        <end position="197"/>
    </location>
</feature>
<feature type="region of interest" description="Disordered" evidence="7">
    <location>
        <begin position="213"/>
        <end position="248"/>
    </location>
</feature>
<feature type="compositionally biased region" description="Polar residues" evidence="7">
    <location>
        <begin position="18"/>
        <end position="32"/>
    </location>
</feature>
<feature type="compositionally biased region" description="Basic and acidic residues" evidence="7">
    <location>
        <begin position="63"/>
        <end position="73"/>
    </location>
</feature>
<feature type="compositionally biased region" description="Acidic residues" evidence="7">
    <location>
        <begin position="171"/>
        <end position="186"/>
    </location>
</feature>
<feature type="compositionally biased region" description="Polar residues" evidence="7">
    <location>
        <begin position="224"/>
        <end position="235"/>
    </location>
</feature>
<feature type="active site" description="Proton acceptor" evidence="5 6">
    <location>
        <position position="387"/>
    </location>
</feature>
<feature type="binding site" evidence="5">
    <location>
        <begin position="274"/>
        <end position="282"/>
    </location>
    <ligand>
        <name>ATP</name>
        <dbReference type="ChEBI" id="CHEBI:30616"/>
    </ligand>
</feature>
<feature type="binding site" evidence="10">
    <location>
        <position position="297"/>
    </location>
    <ligand>
        <name>ATP</name>
        <dbReference type="ChEBI" id="CHEBI:30616"/>
    </ligand>
</feature>
<feature type="modified residue" description="Phosphoserine" evidence="11">
    <location>
        <position position="2"/>
    </location>
</feature>
<feature type="modified residue" description="Phosphoserine" evidence="11">
    <location>
        <position position="4"/>
    </location>
</feature>
<feature type="modified residue" description="Phosphoserine; by autocatalysis" evidence="8">
    <location>
        <position position="50"/>
    </location>
</feature>
<feature type="modified residue" description="Phosphoserine; by autocatalysis" evidence="8">
    <location>
        <position position="139"/>
    </location>
</feature>
<feature type="modified residue" description="Phosphoserine" evidence="3">
    <location>
        <position position="171"/>
    </location>
</feature>
<feature type="modified residue" description="Phosphothreonine; by autocatalysis" evidence="8">
    <location>
        <position position="421"/>
    </location>
</feature>
<feature type="mutagenesis site" description="Loss of kinase activity." evidence="9">
    <original>K</original>
    <variation>A</variation>
    <location>
        <position position="297"/>
    </location>
</feature>
<feature type="mutagenesis site" description="Constitutively active." evidence="9">
    <original>T</original>
    <variation>E</variation>
    <location>
        <position position="421"/>
    </location>
</feature>
<accession>Q62829</accession>
<evidence type="ECO:0000250" key="1"/>
<evidence type="ECO:0000250" key="2">
    <source>
        <dbReference type="UniProtKB" id="O75914"/>
    </source>
</evidence>
<evidence type="ECO:0000250" key="3">
    <source>
        <dbReference type="UniProtKB" id="Q61036"/>
    </source>
</evidence>
<evidence type="ECO:0000255" key="4">
    <source>
        <dbReference type="PROSITE-ProRule" id="PRU00057"/>
    </source>
</evidence>
<evidence type="ECO:0000255" key="5">
    <source>
        <dbReference type="PROSITE-ProRule" id="PRU00159"/>
    </source>
</evidence>
<evidence type="ECO:0000255" key="6">
    <source>
        <dbReference type="PROSITE-ProRule" id="PRU10027"/>
    </source>
</evidence>
<evidence type="ECO:0000256" key="7">
    <source>
        <dbReference type="SAM" id="MobiDB-lite"/>
    </source>
</evidence>
<evidence type="ECO:0000269" key="8">
    <source>
    </source>
</evidence>
<evidence type="ECO:0000269" key="9">
    <source>
    </source>
</evidence>
<evidence type="ECO:0000305" key="10"/>
<evidence type="ECO:0007744" key="11">
    <source>
    </source>
</evidence>
<gene>
    <name type="primary">Pak3</name>
</gene>
<sequence length="544" mass="60711">MSDSLDNEEKPPAPPLRMNSNNRDSSALNHSSKPLPMAPEEKNKKARLRSIFPGGGDKTNKKKEKERPEISLPSDFEHTIHVGFDAVTGEFTGIPEQWARLLQTSNITKLEQKKNPQAVLDVLKFYDSKETVNNQKYMSFTSGDKSAHGYIAAHQSNTKTASEPPLAPPVSEEEDEEEEEEEDDNEPPPVIAPRPEHTKSIYTRSVVESIASPAAPNKEATPPSAENANSSTLYRNTDRQRKKSKMTDEEILEKLRSIVSVGDPKKKYTRFEKIGQGASGTVYTALDIATGQEVAIKQMNLQQQPKKELIINEILVMRENKNPNIVNYLDSYLVGDELWVVMEYLAGGSLTDVVTETCMDEGQIAAVCRECLQALDFLHSNQVIHRDIKSDNILLGMDGSVKLTDFGFCAQITPEQSKRSTMVGTPYWMAPEVVTRKAYGPKVDIWSLGIMAIEMVEGEPPYLNENPLRALYLIATNGTPELQNPERLSAVFRDFLNRCLEMDVDRRGSAKELLQHPFLKLAKPLSSLTPLILAAKEAIKNSSR</sequence>
<proteinExistence type="evidence at protein level"/>
<organism>
    <name type="scientific">Rattus norvegicus</name>
    <name type="common">Rat</name>
    <dbReference type="NCBI Taxonomy" id="10116"/>
    <lineage>
        <taxon>Eukaryota</taxon>
        <taxon>Metazoa</taxon>
        <taxon>Chordata</taxon>
        <taxon>Craniata</taxon>
        <taxon>Vertebrata</taxon>
        <taxon>Euteleostomi</taxon>
        <taxon>Mammalia</taxon>
        <taxon>Eutheria</taxon>
        <taxon>Euarchontoglires</taxon>
        <taxon>Glires</taxon>
        <taxon>Rodentia</taxon>
        <taxon>Myomorpha</taxon>
        <taxon>Muroidea</taxon>
        <taxon>Muridae</taxon>
        <taxon>Murinae</taxon>
        <taxon>Rattus</taxon>
    </lineage>
</organism>
<name>PAK3_RAT</name>
<dbReference type="EC" id="2.7.11.1"/>
<dbReference type="EMBL" id="U33314">
    <property type="protein sequence ID" value="AAC52268.1"/>
    <property type="molecule type" value="mRNA"/>
</dbReference>
<dbReference type="PIR" id="A57597">
    <property type="entry name" value="A57597"/>
</dbReference>
<dbReference type="RefSeq" id="NP_001418487.1">
    <property type="nucleotide sequence ID" value="NM_001431558.1"/>
</dbReference>
<dbReference type="RefSeq" id="NP_062083.1">
    <property type="nucleotide sequence ID" value="NM_019210.2"/>
</dbReference>
<dbReference type="RefSeq" id="XP_006257401.1">
    <property type="nucleotide sequence ID" value="XM_006257339.5"/>
</dbReference>
<dbReference type="RefSeq" id="XP_063135916.1">
    <property type="nucleotide sequence ID" value="XM_063279846.1"/>
</dbReference>
<dbReference type="RefSeq" id="XP_063135917.1">
    <property type="nucleotide sequence ID" value="XM_063279847.1"/>
</dbReference>
<dbReference type="RefSeq" id="XP_063135918.1">
    <property type="nucleotide sequence ID" value="XM_063279848.1"/>
</dbReference>
<dbReference type="RefSeq" id="XP_063135919.1">
    <property type="nucleotide sequence ID" value="XM_063279849.1"/>
</dbReference>
<dbReference type="SMR" id="Q62829"/>
<dbReference type="BioGRID" id="248080">
    <property type="interactions" value="2"/>
</dbReference>
<dbReference type="FunCoup" id="Q62829">
    <property type="interactions" value="1463"/>
</dbReference>
<dbReference type="MINT" id="Q62829"/>
<dbReference type="STRING" id="10116.ENSRNOP00000006459"/>
<dbReference type="iPTMnet" id="Q62829"/>
<dbReference type="PhosphoSitePlus" id="Q62829"/>
<dbReference type="jPOST" id="Q62829"/>
<dbReference type="PaxDb" id="10116-ENSRNOP00000006459"/>
<dbReference type="Ensembl" id="ENSRNOT00000006459.6">
    <property type="protein sequence ID" value="ENSRNOP00000006459.4"/>
    <property type="gene ID" value="ENSRNOG00000004676.8"/>
</dbReference>
<dbReference type="GeneID" id="29433"/>
<dbReference type="KEGG" id="rno:29433"/>
<dbReference type="AGR" id="RGD:3251"/>
<dbReference type="CTD" id="5063"/>
<dbReference type="RGD" id="3251">
    <property type="gene designation" value="Pak3"/>
</dbReference>
<dbReference type="eggNOG" id="KOG0578">
    <property type="taxonomic scope" value="Eukaryota"/>
</dbReference>
<dbReference type="GeneTree" id="ENSGT00950000182988"/>
<dbReference type="HOGENOM" id="CLU_000288_26_6_1"/>
<dbReference type="InParanoid" id="Q62829"/>
<dbReference type="OrthoDB" id="1022360at2759"/>
<dbReference type="BRENDA" id="2.7.11.1">
    <property type="organism ID" value="5301"/>
</dbReference>
<dbReference type="Reactome" id="R-RNO-202433">
    <property type="pathway name" value="Generation of second messenger molecules"/>
</dbReference>
<dbReference type="Reactome" id="R-RNO-389359">
    <property type="pathway name" value="CD28 dependent Vav1 pathway"/>
</dbReference>
<dbReference type="Reactome" id="R-RNO-3928664">
    <property type="pathway name" value="Ephrin signaling"/>
</dbReference>
<dbReference type="Reactome" id="R-RNO-399954">
    <property type="pathway name" value="Sema3A PAK dependent Axon repulsion"/>
</dbReference>
<dbReference type="Reactome" id="R-RNO-5218920">
    <property type="pathway name" value="VEGFR2 mediated vascular permeability"/>
</dbReference>
<dbReference type="Reactome" id="R-RNO-5621575">
    <property type="pathway name" value="CD209 (DC-SIGN) signaling"/>
</dbReference>
<dbReference type="Reactome" id="R-RNO-5627123">
    <property type="pathway name" value="RHO GTPases activate PAKs"/>
</dbReference>
<dbReference type="Reactome" id="R-RNO-5687128">
    <property type="pathway name" value="MAPK6/MAPK4 signaling"/>
</dbReference>
<dbReference type="Reactome" id="R-RNO-9013149">
    <property type="pathway name" value="RAC1 GTPase cycle"/>
</dbReference>
<dbReference type="Reactome" id="R-RNO-9013420">
    <property type="pathway name" value="RHOU GTPase cycle"/>
</dbReference>
<dbReference type="PRO" id="PR:Q62829"/>
<dbReference type="Proteomes" id="UP000002494">
    <property type="component" value="Chromosome X"/>
</dbReference>
<dbReference type="Bgee" id="ENSRNOG00000004676">
    <property type="expression patterns" value="Expressed in Ammon's horn and 7 other cell types or tissues"/>
</dbReference>
<dbReference type="GO" id="GO:0005737">
    <property type="term" value="C:cytoplasm"/>
    <property type="evidence" value="ECO:0000318"/>
    <property type="project" value="GO_Central"/>
</dbReference>
<dbReference type="GO" id="GO:0005768">
    <property type="term" value="C:endosome"/>
    <property type="evidence" value="ECO:0000314"/>
    <property type="project" value="RGD"/>
</dbReference>
<dbReference type="GO" id="GO:0098978">
    <property type="term" value="C:glutamatergic synapse"/>
    <property type="evidence" value="ECO:0000266"/>
    <property type="project" value="RGD"/>
</dbReference>
<dbReference type="GO" id="GO:0014069">
    <property type="term" value="C:postsynaptic density"/>
    <property type="evidence" value="ECO:0000266"/>
    <property type="project" value="RGD"/>
</dbReference>
<dbReference type="GO" id="GO:0005524">
    <property type="term" value="F:ATP binding"/>
    <property type="evidence" value="ECO:0007669"/>
    <property type="project" value="UniProtKB-KW"/>
</dbReference>
<dbReference type="GO" id="GO:0051020">
    <property type="term" value="F:GTPase binding"/>
    <property type="evidence" value="ECO:0000314"/>
    <property type="project" value="RGD"/>
</dbReference>
<dbReference type="GO" id="GO:0004708">
    <property type="term" value="F:MAP kinase kinase activity"/>
    <property type="evidence" value="ECO:0000250"/>
    <property type="project" value="UniProtKB"/>
</dbReference>
<dbReference type="GO" id="GO:0046872">
    <property type="term" value="F:metal ion binding"/>
    <property type="evidence" value="ECO:0007669"/>
    <property type="project" value="UniProtKB-KW"/>
</dbReference>
<dbReference type="GO" id="GO:0004672">
    <property type="term" value="F:protein kinase activity"/>
    <property type="evidence" value="ECO:0000314"/>
    <property type="project" value="RGD"/>
</dbReference>
<dbReference type="GO" id="GO:0106310">
    <property type="term" value="F:protein serine kinase activity"/>
    <property type="evidence" value="ECO:0007669"/>
    <property type="project" value="RHEA"/>
</dbReference>
<dbReference type="GO" id="GO:0004674">
    <property type="term" value="F:protein serine/threonine kinase activity"/>
    <property type="evidence" value="ECO:0000314"/>
    <property type="project" value="RGD"/>
</dbReference>
<dbReference type="GO" id="GO:0017124">
    <property type="term" value="F:SH3 domain binding"/>
    <property type="evidence" value="ECO:0007669"/>
    <property type="project" value="UniProtKB-KW"/>
</dbReference>
<dbReference type="GO" id="GO:0031267">
    <property type="term" value="F:small GTPase binding"/>
    <property type="evidence" value="ECO:0000266"/>
    <property type="project" value="RGD"/>
</dbReference>
<dbReference type="GO" id="GO:0007409">
    <property type="term" value="P:axonogenesis"/>
    <property type="evidence" value="ECO:0000250"/>
    <property type="project" value="UniProtKB"/>
</dbReference>
<dbReference type="GO" id="GO:0016477">
    <property type="term" value="P:cell migration"/>
    <property type="evidence" value="ECO:0000318"/>
    <property type="project" value="GO_Central"/>
</dbReference>
<dbReference type="GO" id="GO:0009267">
    <property type="term" value="P:cellular response to starvation"/>
    <property type="evidence" value="ECO:0000318"/>
    <property type="project" value="GO_Central"/>
</dbReference>
<dbReference type="GO" id="GO:0016358">
    <property type="term" value="P:dendrite development"/>
    <property type="evidence" value="ECO:0000250"/>
    <property type="project" value="UniProtKB"/>
</dbReference>
<dbReference type="GO" id="GO:0060996">
    <property type="term" value="P:dendritic spine development"/>
    <property type="evidence" value="ECO:0000266"/>
    <property type="project" value="RGD"/>
</dbReference>
<dbReference type="GO" id="GO:0060997">
    <property type="term" value="P:dendritic spine morphogenesis"/>
    <property type="evidence" value="ECO:0000250"/>
    <property type="project" value="UniProtKB"/>
</dbReference>
<dbReference type="GO" id="GO:0035556">
    <property type="term" value="P:intracellular signal transduction"/>
    <property type="evidence" value="ECO:0000318"/>
    <property type="project" value="GO_Central"/>
</dbReference>
<dbReference type="GO" id="GO:0061003">
    <property type="term" value="P:positive regulation of dendritic spine morphogenesis"/>
    <property type="evidence" value="ECO:0000315"/>
    <property type="project" value="RGD"/>
</dbReference>
<dbReference type="GO" id="GO:2000573">
    <property type="term" value="P:positive regulation of DNA biosynthetic process"/>
    <property type="evidence" value="ECO:0000315"/>
    <property type="project" value="RGD"/>
</dbReference>
<dbReference type="GO" id="GO:0010763">
    <property type="term" value="P:positive regulation of fibroblast migration"/>
    <property type="evidence" value="ECO:0000315"/>
    <property type="project" value="RGD"/>
</dbReference>
<dbReference type="GO" id="GO:0043525">
    <property type="term" value="P:positive regulation of neuron apoptotic process"/>
    <property type="evidence" value="ECO:0000315"/>
    <property type="project" value="RGD"/>
</dbReference>
<dbReference type="GO" id="GO:0032956">
    <property type="term" value="P:regulation of actin cytoskeleton organization"/>
    <property type="evidence" value="ECO:0000315"/>
    <property type="project" value="RGD"/>
</dbReference>
<dbReference type="GO" id="GO:0030833">
    <property type="term" value="P:regulation of actin filament polymerization"/>
    <property type="evidence" value="ECO:0000250"/>
    <property type="project" value="UniProtKB"/>
</dbReference>
<dbReference type="GO" id="GO:0050770">
    <property type="term" value="P:regulation of axonogenesis"/>
    <property type="evidence" value="ECO:0000318"/>
    <property type="project" value="GO_Central"/>
</dbReference>
<dbReference type="GO" id="GO:0043408">
    <property type="term" value="P:regulation of MAPK cascade"/>
    <property type="evidence" value="ECO:0000318"/>
    <property type="project" value="GO_Central"/>
</dbReference>
<dbReference type="GO" id="GO:0010975">
    <property type="term" value="P:regulation of neuron projection development"/>
    <property type="evidence" value="ECO:0000315"/>
    <property type="project" value="RGD"/>
</dbReference>
<dbReference type="GO" id="GO:0099175">
    <property type="term" value="P:regulation of postsynapse organization"/>
    <property type="evidence" value="ECO:0000266"/>
    <property type="project" value="RGD"/>
</dbReference>
<dbReference type="CDD" id="cd01093">
    <property type="entry name" value="CRIB_PAK_like"/>
    <property type="match status" value="1"/>
</dbReference>
<dbReference type="CDD" id="cd06656">
    <property type="entry name" value="STKc_PAK3"/>
    <property type="match status" value="1"/>
</dbReference>
<dbReference type="FunFam" id="1.10.510.10:FF:000011">
    <property type="entry name" value="Non-specific serine/threonine protein kinase"/>
    <property type="match status" value="1"/>
</dbReference>
<dbReference type="FunFam" id="3.30.200.20:FF:000069">
    <property type="entry name" value="Non-specific serine/threonine protein kinase"/>
    <property type="match status" value="1"/>
</dbReference>
<dbReference type="FunFam" id="3.90.810.10:FF:000001">
    <property type="entry name" value="Non-specific serine/threonine protein kinase"/>
    <property type="match status" value="1"/>
</dbReference>
<dbReference type="Gene3D" id="3.90.810.10">
    <property type="entry name" value="CRIB domain"/>
    <property type="match status" value="1"/>
</dbReference>
<dbReference type="Gene3D" id="3.30.200.20">
    <property type="entry name" value="Phosphorylase Kinase, domain 1"/>
    <property type="match status" value="1"/>
</dbReference>
<dbReference type="Gene3D" id="1.10.510.10">
    <property type="entry name" value="Transferase(Phosphotransferase) domain 1"/>
    <property type="match status" value="1"/>
</dbReference>
<dbReference type="InterPro" id="IPR000095">
    <property type="entry name" value="CRIB_dom"/>
</dbReference>
<dbReference type="InterPro" id="IPR036936">
    <property type="entry name" value="CRIB_dom_sf"/>
</dbReference>
<dbReference type="InterPro" id="IPR011009">
    <property type="entry name" value="Kinase-like_dom_sf"/>
</dbReference>
<dbReference type="InterPro" id="IPR051931">
    <property type="entry name" value="PAK3-like"/>
</dbReference>
<dbReference type="InterPro" id="IPR033923">
    <property type="entry name" value="PAK_BD"/>
</dbReference>
<dbReference type="InterPro" id="IPR000719">
    <property type="entry name" value="Prot_kinase_dom"/>
</dbReference>
<dbReference type="InterPro" id="IPR017441">
    <property type="entry name" value="Protein_kinase_ATP_BS"/>
</dbReference>
<dbReference type="InterPro" id="IPR008271">
    <property type="entry name" value="Ser/Thr_kinase_AS"/>
</dbReference>
<dbReference type="InterPro" id="IPR035063">
    <property type="entry name" value="STK_PAK3"/>
</dbReference>
<dbReference type="PANTHER" id="PTHR45832">
    <property type="entry name" value="SERINE/THREONINE-PROTEIN KINASE SAMKA-RELATED-RELATED"/>
    <property type="match status" value="1"/>
</dbReference>
<dbReference type="PANTHER" id="PTHR45832:SF11">
    <property type="entry name" value="SERINE_THREONINE-PROTEIN KINASE PAK 3"/>
    <property type="match status" value="1"/>
</dbReference>
<dbReference type="Pfam" id="PF00786">
    <property type="entry name" value="PBD"/>
    <property type="match status" value="1"/>
</dbReference>
<dbReference type="Pfam" id="PF00069">
    <property type="entry name" value="Pkinase"/>
    <property type="match status" value="1"/>
</dbReference>
<dbReference type="SMART" id="SM00285">
    <property type="entry name" value="PBD"/>
    <property type="match status" value="1"/>
</dbReference>
<dbReference type="SMART" id="SM00220">
    <property type="entry name" value="S_TKc"/>
    <property type="match status" value="1"/>
</dbReference>
<dbReference type="SUPFAM" id="SSF56112">
    <property type="entry name" value="Protein kinase-like (PK-like)"/>
    <property type="match status" value="1"/>
</dbReference>
<dbReference type="PROSITE" id="PS50108">
    <property type="entry name" value="CRIB"/>
    <property type="match status" value="1"/>
</dbReference>
<dbReference type="PROSITE" id="PS00107">
    <property type="entry name" value="PROTEIN_KINASE_ATP"/>
    <property type="match status" value="1"/>
</dbReference>
<dbReference type="PROSITE" id="PS50011">
    <property type="entry name" value="PROTEIN_KINASE_DOM"/>
    <property type="match status" value="1"/>
</dbReference>
<dbReference type="PROSITE" id="PS00108">
    <property type="entry name" value="PROTEIN_KINASE_ST"/>
    <property type="match status" value="1"/>
</dbReference>
<keyword id="KW-0021">Allosteric enzyme</keyword>
<keyword id="KW-0067">ATP-binding</keyword>
<keyword id="KW-0963">Cytoplasm</keyword>
<keyword id="KW-0217">Developmental protein</keyword>
<keyword id="KW-0903">Direct protein sequencing</keyword>
<keyword id="KW-0418">Kinase</keyword>
<keyword id="KW-0460">Magnesium</keyword>
<keyword id="KW-0479">Metal-binding</keyword>
<keyword id="KW-0547">Nucleotide-binding</keyword>
<keyword id="KW-0597">Phosphoprotein</keyword>
<keyword id="KW-1185">Reference proteome</keyword>
<keyword id="KW-0723">Serine/threonine-protein kinase</keyword>
<keyword id="KW-0729">SH3-binding</keyword>
<keyword id="KW-0808">Transferase</keyword>
<keyword id="KW-0832">Ubl conjugation</keyword>
<protein>
    <recommendedName>
        <fullName>Serine/threonine-protein kinase PAK 3</fullName>
        <ecNumber>2.7.11.1</ecNumber>
    </recommendedName>
    <alternativeName>
        <fullName>Beta-PAK</fullName>
    </alternativeName>
    <alternativeName>
        <fullName>p21-activated kinase 3</fullName>
        <shortName>PAK-3</shortName>
    </alternativeName>
    <alternativeName>
        <fullName>p65-PAK</fullName>
    </alternativeName>
</protein>